<comment type="subcellular location">
    <subcellularLocation>
        <location evidence="1">Spore core</location>
    </subcellularLocation>
</comment>
<comment type="induction">
    <text evidence="1">Expressed only in the forespore compartment of sporulating cells.</text>
</comment>
<comment type="similarity">
    <text evidence="2">Belongs to the SspH family.</text>
</comment>
<dbReference type="EMBL" id="AE016877">
    <property type="protein sequence ID" value="AAP08655.1"/>
    <property type="molecule type" value="Genomic_DNA"/>
</dbReference>
<dbReference type="RefSeq" id="NP_831454.1">
    <property type="nucleotide sequence ID" value="NC_004722.1"/>
</dbReference>
<dbReference type="RefSeq" id="WP_001025739.1">
    <property type="nucleotide sequence ID" value="NC_004722.1"/>
</dbReference>
<dbReference type="STRING" id="226900.BC_1679"/>
<dbReference type="KEGG" id="bce:BC1679"/>
<dbReference type="PATRIC" id="fig|226900.8.peg.1665"/>
<dbReference type="HOGENOM" id="CLU_191960_2_1_9"/>
<dbReference type="OrthoDB" id="1683648at2"/>
<dbReference type="Proteomes" id="UP000001417">
    <property type="component" value="Chromosome"/>
</dbReference>
<dbReference type="GO" id="GO:0042601">
    <property type="term" value="C:endospore-forming forespore"/>
    <property type="evidence" value="ECO:0007669"/>
    <property type="project" value="InterPro"/>
</dbReference>
<dbReference type="GO" id="GO:0030436">
    <property type="term" value="P:asexual sporulation"/>
    <property type="evidence" value="ECO:0007669"/>
    <property type="project" value="UniProtKB-UniRule"/>
</dbReference>
<dbReference type="GO" id="GO:0030435">
    <property type="term" value="P:sporulation resulting in formation of a cellular spore"/>
    <property type="evidence" value="ECO:0007669"/>
    <property type="project" value="UniProtKB-KW"/>
</dbReference>
<dbReference type="HAMAP" id="MF_00667">
    <property type="entry name" value="SspH"/>
    <property type="match status" value="1"/>
</dbReference>
<dbReference type="InterPro" id="IPR012610">
    <property type="entry name" value="SASP_SspH"/>
</dbReference>
<dbReference type="NCBIfam" id="TIGR02861">
    <property type="entry name" value="SASP_H"/>
    <property type="match status" value="1"/>
</dbReference>
<dbReference type="Pfam" id="PF08141">
    <property type="entry name" value="SspH"/>
    <property type="match status" value="1"/>
</dbReference>
<accession>Q81FB5</accession>
<protein>
    <recommendedName>
        <fullName>Small, acid-soluble spore protein H 2</fullName>
        <shortName>SASP H 2</shortName>
    </recommendedName>
</protein>
<reference key="1">
    <citation type="journal article" date="2003" name="Nature">
        <title>Genome sequence of Bacillus cereus and comparative analysis with Bacillus anthracis.</title>
        <authorList>
            <person name="Ivanova N."/>
            <person name="Sorokin A."/>
            <person name="Anderson I."/>
            <person name="Galleron N."/>
            <person name="Candelon B."/>
            <person name="Kapatral V."/>
            <person name="Bhattacharyya A."/>
            <person name="Reznik G."/>
            <person name="Mikhailova N."/>
            <person name="Lapidus A."/>
            <person name="Chu L."/>
            <person name="Mazur M."/>
            <person name="Goltsman E."/>
            <person name="Larsen N."/>
            <person name="D'Souza M."/>
            <person name="Walunas T."/>
            <person name="Grechkin Y."/>
            <person name="Pusch G."/>
            <person name="Haselkorn R."/>
            <person name="Fonstein M."/>
            <person name="Ehrlich S.D."/>
            <person name="Overbeek R."/>
            <person name="Kyrpides N.C."/>
        </authorList>
    </citation>
    <scope>NUCLEOTIDE SEQUENCE [LARGE SCALE GENOMIC DNA]</scope>
    <source>
        <strain>ATCC 14579 / DSM 31 / CCUG 7414 / JCM 2152 / NBRC 15305 / NCIMB 9373 / NCTC 2599 / NRRL B-3711</strain>
    </source>
</reference>
<feature type="chain" id="PRO_0000162315" description="Small, acid-soluble spore protein H 2">
    <location>
        <begin position="1"/>
        <end position="59"/>
    </location>
</feature>
<organism>
    <name type="scientific">Bacillus cereus (strain ATCC 14579 / DSM 31 / CCUG 7414 / JCM 2152 / NBRC 15305 / NCIMB 9373 / NCTC 2599 / NRRL B-3711)</name>
    <dbReference type="NCBI Taxonomy" id="226900"/>
    <lineage>
        <taxon>Bacteria</taxon>
        <taxon>Bacillati</taxon>
        <taxon>Bacillota</taxon>
        <taxon>Bacilli</taxon>
        <taxon>Bacillales</taxon>
        <taxon>Bacillaceae</taxon>
        <taxon>Bacillus</taxon>
        <taxon>Bacillus cereus group</taxon>
    </lineage>
</organism>
<proteinExistence type="inferred from homology"/>
<evidence type="ECO:0000250" key="1"/>
<evidence type="ECO:0000305" key="2"/>
<sequence>MNIQRAKELSVSAEQANVSFQGMPVMIQHVDESNETARIYEVKNPERELTVPVNSLEEI</sequence>
<keyword id="KW-1185">Reference proteome</keyword>
<keyword id="KW-0749">Sporulation</keyword>
<name>SSPH2_BACCR</name>
<gene>
    <name type="primary">sspH2</name>
    <name type="ordered locus">BC_1679</name>
</gene>